<comment type="function">
    <text evidence="1">Catalyzes the N-acylation of UDP-3-O-acylglucosamine using 3-hydroxyacyl-ACP as the acyl donor. Is involved in the biosynthesis of lipid A, a phosphorylated glycolipid that anchors the lipopolysaccharide to the outer membrane of the cell.</text>
</comment>
<comment type="catalytic activity">
    <reaction evidence="1">
        <text>a UDP-3-O-[(3R)-3-hydroxyacyl]-alpha-D-glucosamine + a (3R)-hydroxyacyl-[ACP] = a UDP-2-N,3-O-bis[(3R)-3-hydroxyacyl]-alpha-D-glucosamine + holo-[ACP] + H(+)</text>
        <dbReference type="Rhea" id="RHEA:53836"/>
        <dbReference type="Rhea" id="RHEA-COMP:9685"/>
        <dbReference type="Rhea" id="RHEA-COMP:9945"/>
        <dbReference type="ChEBI" id="CHEBI:15378"/>
        <dbReference type="ChEBI" id="CHEBI:64479"/>
        <dbReference type="ChEBI" id="CHEBI:78827"/>
        <dbReference type="ChEBI" id="CHEBI:137740"/>
        <dbReference type="ChEBI" id="CHEBI:137748"/>
        <dbReference type="EC" id="2.3.1.191"/>
    </reaction>
</comment>
<comment type="pathway">
    <text evidence="1">Bacterial outer membrane biogenesis; LPS lipid A biosynthesis.</text>
</comment>
<comment type="subunit">
    <text evidence="1">Homotrimer.</text>
</comment>
<comment type="similarity">
    <text evidence="1">Belongs to the transferase hexapeptide repeat family. LpxD subfamily.</text>
</comment>
<feature type="chain" id="PRO_0000264401" description="UDP-3-O-acylglucosamine N-acyltransferase 2">
    <location>
        <begin position="1"/>
        <end position="341"/>
    </location>
</feature>
<feature type="active site" description="Proton acceptor" evidence="1">
    <location>
        <position position="254"/>
    </location>
</feature>
<keyword id="KW-0012">Acyltransferase</keyword>
<keyword id="KW-0441">Lipid A biosynthesis</keyword>
<keyword id="KW-0444">Lipid biosynthesis</keyword>
<keyword id="KW-0443">Lipid metabolism</keyword>
<keyword id="KW-1185">Reference proteome</keyword>
<keyword id="KW-0677">Repeat</keyword>
<keyword id="KW-0808">Transferase</keyword>
<organism>
    <name type="scientific">Nitrobacter winogradskyi (strain ATCC 25391 / DSM 10237 / CIP 104748 / NCIMB 11846 / Nb-255)</name>
    <dbReference type="NCBI Taxonomy" id="323098"/>
    <lineage>
        <taxon>Bacteria</taxon>
        <taxon>Pseudomonadati</taxon>
        <taxon>Pseudomonadota</taxon>
        <taxon>Alphaproteobacteria</taxon>
        <taxon>Hyphomicrobiales</taxon>
        <taxon>Nitrobacteraceae</taxon>
        <taxon>Nitrobacter</taxon>
    </lineage>
</organism>
<reference key="1">
    <citation type="journal article" date="2006" name="Appl. Environ. Microbiol.">
        <title>Genome sequence of the chemolithoautotrophic nitrite-oxidizing bacterium Nitrobacter winogradskyi Nb-255.</title>
        <authorList>
            <person name="Starkenburg S.R."/>
            <person name="Chain P.S.G."/>
            <person name="Sayavedra-Soto L.A."/>
            <person name="Hauser L."/>
            <person name="Land M.L."/>
            <person name="Larimer F.W."/>
            <person name="Malfatti S.A."/>
            <person name="Klotz M.G."/>
            <person name="Bottomley P.J."/>
            <person name="Arp D.J."/>
            <person name="Hickey W.J."/>
        </authorList>
    </citation>
    <scope>NUCLEOTIDE SEQUENCE [LARGE SCALE GENOMIC DNA]</scope>
    <source>
        <strain>ATCC 25391 / DSM 10237 / CIP 104748 / NCIMB 11846 / Nb-255</strain>
    </source>
</reference>
<protein>
    <recommendedName>
        <fullName evidence="1">UDP-3-O-acylglucosamine N-acyltransferase 2</fullName>
        <ecNumber evidence="1">2.3.1.191</ecNumber>
    </recommendedName>
</protein>
<sequence length="341" mass="35050">MSGETFFLSNHSVAASQIAALAGLSFVTEDFAISAAGALATAGIGEICYMDDTKYIEELKVTRASACLISPRFKELVPGGTFSFVTPHPYAIYAQVLALLYPEATIPASNFGTNGISSKANIHASAIVGHGVTIDPGASVGPNARIGGFTCIGSNAVIGPSVRIGRNCYIGANVTVAYAVVGDRVIIHPGTSIGQDGFGFTFLGGKWVKVPQVGGVIIQDDVEVGANTTIDRGSMRATVIGEGTKLDNLVQVAHNVTIGAHCVIAAQVGIAGSTTIGDFVAIGGHAGIAPHLTIGEKAQIGGASGVMCDIPAGERWVGLPARPSRAFFRQFAALKRLAKKK</sequence>
<proteinExistence type="inferred from homology"/>
<gene>
    <name evidence="1" type="primary">lpxD2</name>
    <name type="ordered locus">Nwi_3100</name>
</gene>
<name>LPXD2_NITWN</name>
<accession>Q3SMZ4</accession>
<dbReference type="EC" id="2.3.1.191" evidence="1"/>
<dbReference type="EMBL" id="CP000115">
    <property type="protein sequence ID" value="ABA06347.1"/>
    <property type="molecule type" value="Genomic_DNA"/>
</dbReference>
<dbReference type="RefSeq" id="WP_011316260.1">
    <property type="nucleotide sequence ID" value="NC_007406.1"/>
</dbReference>
<dbReference type="SMR" id="Q3SMZ4"/>
<dbReference type="STRING" id="323098.Nwi_3100"/>
<dbReference type="KEGG" id="nwi:Nwi_3100"/>
<dbReference type="eggNOG" id="COG1044">
    <property type="taxonomic scope" value="Bacteria"/>
</dbReference>
<dbReference type="HOGENOM" id="CLU_049865_0_2_5"/>
<dbReference type="OrthoDB" id="9784739at2"/>
<dbReference type="UniPathway" id="UPA00973"/>
<dbReference type="Proteomes" id="UP000002531">
    <property type="component" value="Chromosome"/>
</dbReference>
<dbReference type="GO" id="GO:0016020">
    <property type="term" value="C:membrane"/>
    <property type="evidence" value="ECO:0007669"/>
    <property type="project" value="GOC"/>
</dbReference>
<dbReference type="GO" id="GO:0016410">
    <property type="term" value="F:N-acyltransferase activity"/>
    <property type="evidence" value="ECO:0007669"/>
    <property type="project" value="InterPro"/>
</dbReference>
<dbReference type="GO" id="GO:0009245">
    <property type="term" value="P:lipid A biosynthetic process"/>
    <property type="evidence" value="ECO:0007669"/>
    <property type="project" value="UniProtKB-UniRule"/>
</dbReference>
<dbReference type="CDD" id="cd03352">
    <property type="entry name" value="LbH_LpxD"/>
    <property type="match status" value="1"/>
</dbReference>
<dbReference type="Gene3D" id="2.160.10.10">
    <property type="entry name" value="Hexapeptide repeat proteins"/>
    <property type="match status" value="1"/>
</dbReference>
<dbReference type="Gene3D" id="3.40.1390.10">
    <property type="entry name" value="MurE/MurF, N-terminal domain"/>
    <property type="match status" value="1"/>
</dbReference>
<dbReference type="HAMAP" id="MF_00523">
    <property type="entry name" value="LpxD"/>
    <property type="match status" value="1"/>
</dbReference>
<dbReference type="InterPro" id="IPR001451">
    <property type="entry name" value="Hexapep"/>
</dbReference>
<dbReference type="InterPro" id="IPR018357">
    <property type="entry name" value="Hexapep_transf_CS"/>
</dbReference>
<dbReference type="InterPro" id="IPR007691">
    <property type="entry name" value="LpxD"/>
</dbReference>
<dbReference type="InterPro" id="IPR011004">
    <property type="entry name" value="Trimer_LpxA-like_sf"/>
</dbReference>
<dbReference type="InterPro" id="IPR020573">
    <property type="entry name" value="UDP_GlcNAc_AcTrfase_non-rep"/>
</dbReference>
<dbReference type="NCBIfam" id="TIGR01853">
    <property type="entry name" value="lipid_A_lpxD"/>
    <property type="match status" value="1"/>
</dbReference>
<dbReference type="NCBIfam" id="NF002060">
    <property type="entry name" value="PRK00892.1"/>
    <property type="match status" value="1"/>
</dbReference>
<dbReference type="PANTHER" id="PTHR43378">
    <property type="entry name" value="UDP-3-O-ACYLGLUCOSAMINE N-ACYLTRANSFERASE"/>
    <property type="match status" value="1"/>
</dbReference>
<dbReference type="PANTHER" id="PTHR43378:SF2">
    <property type="entry name" value="UDP-3-O-ACYLGLUCOSAMINE N-ACYLTRANSFERASE 1, MITOCHONDRIAL-RELATED"/>
    <property type="match status" value="1"/>
</dbReference>
<dbReference type="Pfam" id="PF00132">
    <property type="entry name" value="Hexapep"/>
    <property type="match status" value="2"/>
</dbReference>
<dbReference type="Pfam" id="PF14602">
    <property type="entry name" value="Hexapep_2"/>
    <property type="match status" value="1"/>
</dbReference>
<dbReference type="Pfam" id="PF04613">
    <property type="entry name" value="LpxD"/>
    <property type="match status" value="1"/>
</dbReference>
<dbReference type="SUPFAM" id="SSF51161">
    <property type="entry name" value="Trimeric LpxA-like enzymes"/>
    <property type="match status" value="1"/>
</dbReference>
<dbReference type="PROSITE" id="PS00101">
    <property type="entry name" value="HEXAPEP_TRANSFERASES"/>
    <property type="match status" value="3"/>
</dbReference>
<evidence type="ECO:0000255" key="1">
    <source>
        <dbReference type="HAMAP-Rule" id="MF_00523"/>
    </source>
</evidence>